<reference key="1">
    <citation type="journal article" date="2003" name="Am. J. Phys. Anthropol.">
        <title>Evolution of a pigmentation gene, the melanocortin-1 receptor, in primates.</title>
        <authorList>
            <person name="Mundy N.I."/>
            <person name="Kelly J."/>
        </authorList>
    </citation>
    <scope>NUCLEOTIDE SEQUENCE [GENOMIC DNA]</scope>
    <source>
        <strain>Isolate 1</strain>
    </source>
</reference>
<sequence>MPMQGAHRKLLGSLNSTPTATSNLGLAANHTGAPCLEVSIPDGLFLSLGLVSLVENVLVVAAIAKNRNLHSSMYCFICCLALSDLLVSGSNMLETAVILLLEAGALATRTSVVQQLHNTIDVLTCSSMLCSLCFLGAIAVDRYISIFYALRYHSIMTLPRAQRAIAAIWVASVLSSTLFITYYDHAAVLLCLVVFFLAMLVLMAVLYVHMLARACQHAHGIIRLHKRQSPAHQGFGLRGAATLTILLGIFFLCWGPFFLHLTLVVFCPQHLTCSCIFKNFKVFLTLIICNTIIDPLIYAFRSQELRRTLKEVLCSW</sequence>
<keyword id="KW-1003">Cell membrane</keyword>
<keyword id="KW-0297">G-protein coupled receptor</keyword>
<keyword id="KW-0325">Glycoprotein</keyword>
<keyword id="KW-0449">Lipoprotein</keyword>
<keyword id="KW-0472">Membrane</keyword>
<keyword id="KW-0564">Palmitate</keyword>
<keyword id="KW-0675">Receptor</keyword>
<keyword id="KW-0807">Transducer</keyword>
<keyword id="KW-0812">Transmembrane</keyword>
<keyword id="KW-1133">Transmembrane helix</keyword>
<proteinExistence type="inferred from homology"/>
<evidence type="ECO:0000250" key="1">
    <source>
        <dbReference type="UniProtKB" id="Q01726"/>
    </source>
</evidence>
<evidence type="ECO:0000255" key="2"/>
<evidence type="ECO:0000255" key="3">
    <source>
        <dbReference type="PROSITE-ProRule" id="PRU00521"/>
    </source>
</evidence>
<protein>
    <recommendedName>
        <fullName>Melanocyte-stimulating hormone receptor</fullName>
        <shortName>MSH-R</shortName>
    </recommendedName>
    <alternativeName>
        <fullName>Melanocortin receptor 1</fullName>
        <shortName>MC1-R</shortName>
    </alternativeName>
</protein>
<accession>Q864H4</accession>
<name>MSHR_LEOFU</name>
<organism>
    <name type="scientific">Leontocebus fuscicollis</name>
    <name type="common">Brown-mantled tamarin</name>
    <name type="synonym">Saguinus fuscicollis</name>
    <dbReference type="NCBI Taxonomy" id="9487"/>
    <lineage>
        <taxon>Eukaryota</taxon>
        <taxon>Metazoa</taxon>
        <taxon>Chordata</taxon>
        <taxon>Craniata</taxon>
        <taxon>Vertebrata</taxon>
        <taxon>Euteleostomi</taxon>
        <taxon>Mammalia</taxon>
        <taxon>Eutheria</taxon>
        <taxon>Euarchontoglires</taxon>
        <taxon>Primates</taxon>
        <taxon>Haplorrhini</taxon>
        <taxon>Platyrrhini</taxon>
        <taxon>Cebidae</taxon>
        <taxon>Callitrichinae</taxon>
        <taxon>Leontocebus</taxon>
    </lineage>
</organism>
<feature type="chain" id="PRO_0000069844" description="Melanocyte-stimulating hormone receptor">
    <location>
        <begin position="1"/>
        <end position="316"/>
    </location>
</feature>
<feature type="topological domain" description="Extracellular" evidence="2">
    <location>
        <begin position="1"/>
        <end position="37"/>
    </location>
</feature>
<feature type="transmembrane region" description="Helical; Name=1" evidence="2">
    <location>
        <begin position="38"/>
        <end position="63"/>
    </location>
</feature>
<feature type="topological domain" description="Cytoplasmic" evidence="2">
    <location>
        <begin position="64"/>
        <end position="72"/>
    </location>
</feature>
<feature type="transmembrane region" description="Helical; Name=2" evidence="2">
    <location>
        <begin position="73"/>
        <end position="93"/>
    </location>
</feature>
<feature type="topological domain" description="Extracellular" evidence="2">
    <location>
        <begin position="94"/>
        <end position="118"/>
    </location>
</feature>
<feature type="transmembrane region" description="Helical; Name=3" evidence="2">
    <location>
        <begin position="119"/>
        <end position="140"/>
    </location>
</feature>
<feature type="topological domain" description="Cytoplasmic" evidence="2">
    <location>
        <begin position="141"/>
        <end position="163"/>
    </location>
</feature>
<feature type="transmembrane region" description="Helical; Name=4" evidence="2">
    <location>
        <begin position="164"/>
        <end position="183"/>
    </location>
</feature>
<feature type="topological domain" description="Extracellular" evidence="2">
    <location>
        <begin position="184"/>
        <end position="191"/>
    </location>
</feature>
<feature type="transmembrane region" description="Helical; Name=5" evidence="2">
    <location>
        <begin position="192"/>
        <end position="211"/>
    </location>
</feature>
<feature type="topological domain" description="Cytoplasmic" evidence="2">
    <location>
        <begin position="212"/>
        <end position="240"/>
    </location>
</feature>
<feature type="transmembrane region" description="Helical; Name=6" evidence="2">
    <location>
        <begin position="241"/>
        <end position="266"/>
    </location>
</feature>
<feature type="topological domain" description="Extracellular" evidence="2">
    <location>
        <begin position="267"/>
        <end position="279"/>
    </location>
</feature>
<feature type="transmembrane region" description="Helical; Name=7" evidence="2">
    <location>
        <begin position="280"/>
        <end position="300"/>
    </location>
</feature>
<feature type="topological domain" description="Cytoplasmic" evidence="2">
    <location>
        <begin position="301"/>
        <end position="316"/>
    </location>
</feature>
<feature type="lipid moiety-binding region" description="S-palmitoyl cysteine" evidence="2">
    <location>
        <position position="314"/>
    </location>
</feature>
<feature type="glycosylation site" description="N-linked (GlcNAc...) asparagine" evidence="2">
    <location>
        <position position="29"/>
    </location>
</feature>
<comment type="function">
    <text evidence="1">Receptor for MSH (alpha, beta and gamma) and ACTH. The activity of this receptor is mediated by G proteins which activate adenylate cyclase. Mediates melanogenesis, the production of eumelanin (black/brown) and phaeomelanin (red/yellow), via regulation of cAMP signaling in melanocytes.</text>
</comment>
<comment type="subunit">
    <text evidence="1">Interacts with MGRN1, but does not undergo MGRN1-mediated ubiquitination; this interaction competes with GNAS-binding and thus inhibits agonist-induced cAMP production. Interacts with OPN3; the interaction results in a decrease in MC1R-mediated cAMP signaling and ultimately a decrease in melanin production in melanocytes.</text>
</comment>
<comment type="subcellular location">
    <subcellularLocation>
        <location evidence="1">Cell membrane</location>
        <topology evidence="2">Multi-pass membrane protein</topology>
    </subcellularLocation>
</comment>
<comment type="similarity">
    <text evidence="3">Belongs to the G-protein coupled receptor 1 family.</text>
</comment>
<dbReference type="EMBL" id="AY205123">
    <property type="protein sequence ID" value="AAP30997.1"/>
    <property type="molecule type" value="Genomic_DNA"/>
</dbReference>
<dbReference type="SMR" id="Q864H4"/>
<dbReference type="GlyCosmos" id="Q864H4">
    <property type="glycosylation" value="1 site, No reported glycans"/>
</dbReference>
<dbReference type="GO" id="GO:0005886">
    <property type="term" value="C:plasma membrane"/>
    <property type="evidence" value="ECO:0000250"/>
    <property type="project" value="UniProtKB"/>
</dbReference>
<dbReference type="GO" id="GO:0004980">
    <property type="term" value="F:melanocyte-stimulating hormone receptor activity"/>
    <property type="evidence" value="ECO:0007669"/>
    <property type="project" value="InterPro"/>
</dbReference>
<dbReference type="GO" id="GO:0007189">
    <property type="term" value="P:adenylate cyclase-activating G protein-coupled receptor signaling pathway"/>
    <property type="evidence" value="ECO:0007669"/>
    <property type="project" value="UniProtKB-ARBA"/>
</dbReference>
<dbReference type="FunFam" id="1.20.1070.10:FF:000211">
    <property type="entry name" value="Melanocyte-stimulating hormone receptor"/>
    <property type="match status" value="1"/>
</dbReference>
<dbReference type="Gene3D" id="1.20.1070.10">
    <property type="entry name" value="Rhodopsin 7-helix transmembrane proteins"/>
    <property type="match status" value="1"/>
</dbReference>
<dbReference type="InterPro" id="IPR000276">
    <property type="entry name" value="GPCR_Rhodpsn"/>
</dbReference>
<dbReference type="InterPro" id="IPR017452">
    <property type="entry name" value="GPCR_Rhodpsn_7TM"/>
</dbReference>
<dbReference type="InterPro" id="IPR001671">
    <property type="entry name" value="Melcrt_ACTH_rcpt"/>
</dbReference>
<dbReference type="InterPro" id="IPR000761">
    <property type="entry name" value="MSH_rcpt"/>
</dbReference>
<dbReference type="PANTHER" id="PTHR22750">
    <property type="entry name" value="G-PROTEIN COUPLED RECEPTOR"/>
    <property type="match status" value="1"/>
</dbReference>
<dbReference type="Pfam" id="PF00001">
    <property type="entry name" value="7tm_1"/>
    <property type="match status" value="1"/>
</dbReference>
<dbReference type="PRINTS" id="PR00237">
    <property type="entry name" value="GPCRRHODOPSN"/>
</dbReference>
<dbReference type="PRINTS" id="PR00534">
    <property type="entry name" value="MCRFAMILY"/>
</dbReference>
<dbReference type="PRINTS" id="PR00536">
    <property type="entry name" value="MELNOCYTESHR"/>
</dbReference>
<dbReference type="SMART" id="SM01381">
    <property type="entry name" value="7TM_GPCR_Srsx"/>
    <property type="match status" value="1"/>
</dbReference>
<dbReference type="SUPFAM" id="SSF81321">
    <property type="entry name" value="Family A G protein-coupled receptor-like"/>
    <property type="match status" value="1"/>
</dbReference>
<dbReference type="PROSITE" id="PS00237">
    <property type="entry name" value="G_PROTEIN_RECEP_F1_1"/>
    <property type="match status" value="1"/>
</dbReference>
<dbReference type="PROSITE" id="PS50262">
    <property type="entry name" value="G_PROTEIN_RECEP_F1_2"/>
    <property type="match status" value="1"/>
</dbReference>
<gene>
    <name type="primary">MC1R</name>
</gene>